<sequence length="387" mass="43322">METVAAIKTLIQQLAQSTDQFGRAEINDALRELQYSLETPFDTVMRMSLDTCQVAVARIGSDLGLFKHLSQCASPQSAEELADHLGCGRELMSRLLRYMASVRMVQQTDDIKYISSNITQTLAVPGLEAGMRHAFENLWPVLMALPDFLAERKYPDIVDAKDTAFQKAFNTDQDCFHWLATQPTRIANFKVLLTDERTPNFLSTFPLEKELGSWSAEPEKALFVDIGGGMGHACIRLREKYPNQPGRVILQDLPPVLQAAQATLPLSGIESMPHNFHTPQPVQGAKFYFLRLILRDFPDHQALEILQNIVPAMDAESRIVIDDGVPPEKGARWAETGTDICIMSALGSKERTQRQWEELAAKAGLQLQALYQYTWPVVNAAMVFSLQ</sequence>
<evidence type="ECO:0000250" key="1"/>
<evidence type="ECO:0000250" key="2">
    <source>
        <dbReference type="UniProtKB" id="O04385"/>
    </source>
</evidence>
<evidence type="ECO:0000255" key="3">
    <source>
        <dbReference type="PROSITE-ProRule" id="PRU01020"/>
    </source>
</evidence>
<evidence type="ECO:0000269" key="4">
    <source>
    </source>
</evidence>
<evidence type="ECO:0000303" key="5">
    <source>
    </source>
</evidence>
<evidence type="ECO:0000305" key="6"/>
<evidence type="ECO:0000305" key="7">
    <source>
    </source>
</evidence>
<evidence type="ECO:0000305" key="8">
    <source>
    </source>
</evidence>
<evidence type="ECO:0007829" key="9">
    <source>
        <dbReference type="PDB" id="6IX5"/>
    </source>
</evidence>
<evidence type="ECO:0007829" key="10">
    <source>
        <dbReference type="PDB" id="6IX8"/>
    </source>
</evidence>
<dbReference type="EC" id="2.1.1.-" evidence="8"/>
<dbReference type="EMBL" id="EQ963479">
    <property type="protein sequence ID" value="EED49872.1"/>
    <property type="molecule type" value="Genomic_DNA"/>
</dbReference>
<dbReference type="RefSeq" id="XP_002380253.1">
    <property type="nucleotide sequence ID" value="XM_002380212.1"/>
</dbReference>
<dbReference type="PDB" id="5ZZD">
    <property type="method" value="X-ray"/>
    <property type="resolution" value="1.85 A"/>
    <property type="chains" value="A/B=1-387"/>
</dbReference>
<dbReference type="PDB" id="6INW">
    <property type="method" value="X-ray"/>
    <property type="resolution" value="1.80 A"/>
    <property type="chains" value="A/B=1-387"/>
</dbReference>
<dbReference type="PDB" id="6IV7">
    <property type="method" value="X-ray"/>
    <property type="resolution" value="1.94 A"/>
    <property type="chains" value="A/B=2-387"/>
</dbReference>
<dbReference type="PDB" id="6IX3">
    <property type="method" value="X-ray"/>
    <property type="resolution" value="2.13 A"/>
    <property type="chains" value="A/B=2-387"/>
</dbReference>
<dbReference type="PDB" id="6IX5">
    <property type="method" value="X-ray"/>
    <property type="resolution" value="1.70 A"/>
    <property type="chains" value="A/B=2-387"/>
</dbReference>
<dbReference type="PDB" id="6IX7">
    <property type="method" value="X-ray"/>
    <property type="resolution" value="1.83 A"/>
    <property type="chains" value="A/B=2-387"/>
</dbReference>
<dbReference type="PDB" id="6IX8">
    <property type="method" value="X-ray"/>
    <property type="resolution" value="1.66 A"/>
    <property type="chains" value="A/B=2-387"/>
</dbReference>
<dbReference type="PDB" id="6IX9">
    <property type="method" value="X-ray"/>
    <property type="resolution" value="1.78 A"/>
    <property type="chains" value="A/B=2-387"/>
</dbReference>
<dbReference type="PDB" id="6J1O">
    <property type="method" value="X-ray"/>
    <property type="resolution" value="1.70 A"/>
    <property type="chains" value="A/B=1-387"/>
</dbReference>
<dbReference type="PDB" id="6J24">
    <property type="method" value="X-ray"/>
    <property type="resolution" value="2.24 A"/>
    <property type="chains" value="A/B=1-387"/>
</dbReference>
<dbReference type="PDB" id="6J46">
    <property type="method" value="X-ray"/>
    <property type="resolution" value="2.62 A"/>
    <property type="chains" value="A/B=1-387"/>
</dbReference>
<dbReference type="PDBsum" id="5ZZD"/>
<dbReference type="PDBsum" id="6INW"/>
<dbReference type="PDBsum" id="6IV7"/>
<dbReference type="PDBsum" id="6IX3"/>
<dbReference type="PDBsum" id="6IX5"/>
<dbReference type="PDBsum" id="6IX7"/>
<dbReference type="PDBsum" id="6IX8"/>
<dbReference type="PDBsum" id="6IX9"/>
<dbReference type="PDBsum" id="6J1O"/>
<dbReference type="PDBsum" id="6J24"/>
<dbReference type="PDBsum" id="6J46"/>
<dbReference type="SMR" id="B8NJH3"/>
<dbReference type="EnsemblFungi" id="EED49872">
    <property type="protein sequence ID" value="EED49872"/>
    <property type="gene ID" value="AFLA_066940"/>
</dbReference>
<dbReference type="VEuPathDB" id="FungiDB:AFLA_008631"/>
<dbReference type="eggNOG" id="KOG3178">
    <property type="taxonomic scope" value="Eukaryota"/>
</dbReference>
<dbReference type="HOGENOM" id="CLU_005533_5_0_1"/>
<dbReference type="OMA" id="RIMHDWP"/>
<dbReference type="BioCyc" id="MetaCyc:MONOMER-22094"/>
<dbReference type="GO" id="GO:0008171">
    <property type="term" value="F:O-methyltransferase activity"/>
    <property type="evidence" value="ECO:0007669"/>
    <property type="project" value="InterPro"/>
</dbReference>
<dbReference type="GO" id="GO:0046983">
    <property type="term" value="F:protein dimerization activity"/>
    <property type="evidence" value="ECO:0007669"/>
    <property type="project" value="InterPro"/>
</dbReference>
<dbReference type="GO" id="GO:0032259">
    <property type="term" value="P:methylation"/>
    <property type="evidence" value="ECO:0007669"/>
    <property type="project" value="UniProtKB-KW"/>
</dbReference>
<dbReference type="GO" id="GO:0044550">
    <property type="term" value="P:secondary metabolite biosynthetic process"/>
    <property type="evidence" value="ECO:0007669"/>
    <property type="project" value="UniProtKB-ARBA"/>
</dbReference>
<dbReference type="Gene3D" id="3.40.50.150">
    <property type="entry name" value="Vaccinia Virus protein VP39"/>
    <property type="match status" value="1"/>
</dbReference>
<dbReference type="Gene3D" id="1.10.10.10">
    <property type="entry name" value="Winged helix-like DNA-binding domain superfamily/Winged helix DNA-binding domain"/>
    <property type="match status" value="1"/>
</dbReference>
<dbReference type="InterPro" id="IPR016461">
    <property type="entry name" value="COMT-like"/>
</dbReference>
<dbReference type="InterPro" id="IPR001077">
    <property type="entry name" value="O_MeTrfase_dom"/>
</dbReference>
<dbReference type="InterPro" id="IPR012967">
    <property type="entry name" value="Plant_O-MeTrfase_dimerisation"/>
</dbReference>
<dbReference type="InterPro" id="IPR029063">
    <property type="entry name" value="SAM-dependent_MTases_sf"/>
</dbReference>
<dbReference type="InterPro" id="IPR036388">
    <property type="entry name" value="WH-like_DNA-bd_sf"/>
</dbReference>
<dbReference type="InterPro" id="IPR036390">
    <property type="entry name" value="WH_DNA-bd_sf"/>
</dbReference>
<dbReference type="PANTHER" id="PTHR43712:SF2">
    <property type="entry name" value="O-METHYLTRANSFERASE CICE"/>
    <property type="match status" value="1"/>
</dbReference>
<dbReference type="PANTHER" id="PTHR43712">
    <property type="entry name" value="PUTATIVE (AFU_ORTHOLOGUE AFUA_4G14580)-RELATED"/>
    <property type="match status" value="1"/>
</dbReference>
<dbReference type="Pfam" id="PF08100">
    <property type="entry name" value="Dimerisation"/>
    <property type="match status" value="1"/>
</dbReference>
<dbReference type="Pfam" id="PF00891">
    <property type="entry name" value="Methyltransf_2"/>
    <property type="match status" value="1"/>
</dbReference>
<dbReference type="PIRSF" id="PIRSF005739">
    <property type="entry name" value="O-mtase"/>
    <property type="match status" value="1"/>
</dbReference>
<dbReference type="SUPFAM" id="SSF53335">
    <property type="entry name" value="S-adenosyl-L-methionine-dependent methyltransferases"/>
    <property type="match status" value="1"/>
</dbReference>
<dbReference type="SUPFAM" id="SSF46785">
    <property type="entry name" value="Winged helix' DNA-binding domain"/>
    <property type="match status" value="1"/>
</dbReference>
<dbReference type="PROSITE" id="PS51683">
    <property type="entry name" value="SAM_OMT_II"/>
    <property type="match status" value="1"/>
</dbReference>
<comment type="function">
    <text evidence="4 7">O-methyltransferase; part of the gene cluster 23 that mediates the biosynthesis of a family of 2-pyridones known as leporins (PubMed:20447271, PubMed:26051490). The hybrid PKS-NRPS synthetase lepA and the enoyl reductase lepG are responsible for fusion of phenylalanine with a hexaketide and subsequent release of the stable tetramic acid precursor, pre-leporin C (PubMed:26051490). Because lepA lacks a designated enoylreductase (ER) domain, the required activity is provided the enoyl reductase lepG (PubMed:26051490). It is possible that the dehydrogenase lepF also participates in production of pre-leporin C (PubMed:26051490). Cytochrome P450 monooxygenase lepH is then required for the ring expansion step to yield leporin C (PubMed:26051490). Leporin C is then presumably further oxidized by the N-hydroxylase lepD to form leporin B (PubMed:26051490). LepI may possess a function in biosynthesis upstream of lepA (PubMed:26051490). Leporin B is further oxidized in the presence of ferric ion to give the leporin B trimer-iron chelate, but whether or not this reaction is catalyzed by an enzyme in the pathway or by ferric ion is not determined yet (PubMed:26051490).</text>
</comment>
<comment type="disruption phenotype">
    <text evidence="4">Resulted in about a 5-fold reduction in leporin C accumulation while leporin B is not detected (PubMed:26051490).</text>
</comment>
<comment type="similarity">
    <text evidence="6">Belongs to the class I-like SAM-binding methyltransferase superfamily. Cation-independent O-methyltransferase family.</text>
</comment>
<name>LEPI_ASPFN</name>
<gene>
    <name evidence="5" type="primary">lepI</name>
    <name type="ORF">AFLA_066940</name>
</gene>
<proteinExistence type="evidence at protein level"/>
<keyword id="KW-0002">3D-structure</keyword>
<keyword id="KW-0489">Methyltransferase</keyword>
<keyword id="KW-0949">S-adenosyl-L-methionine</keyword>
<keyword id="KW-0808">Transferase</keyword>
<accession>B8NJH3</accession>
<organism>
    <name type="scientific">Aspergillus flavus (strain ATCC 200026 / FGSC A1120 / IAM 13836 / NRRL 3357 / JCM 12722 / SRRC 167)</name>
    <dbReference type="NCBI Taxonomy" id="332952"/>
    <lineage>
        <taxon>Eukaryota</taxon>
        <taxon>Fungi</taxon>
        <taxon>Dikarya</taxon>
        <taxon>Ascomycota</taxon>
        <taxon>Pezizomycotina</taxon>
        <taxon>Eurotiomycetes</taxon>
        <taxon>Eurotiomycetidae</taxon>
        <taxon>Eurotiales</taxon>
        <taxon>Aspergillaceae</taxon>
        <taxon>Aspergillus</taxon>
        <taxon>Aspergillus subgen. Circumdati</taxon>
    </lineage>
</organism>
<reference key="1">
    <citation type="journal article" date="2015" name="Genome Announc.">
        <title>Genome sequence of Aspergillus flavus NRRL 3357, a strain that causes aflatoxin contamination of food and feed.</title>
        <authorList>
            <person name="Nierman W.C."/>
            <person name="Yu J."/>
            <person name="Fedorova-Abrams N.D."/>
            <person name="Losada L."/>
            <person name="Cleveland T.E."/>
            <person name="Bhatnagar D."/>
            <person name="Bennett J.W."/>
            <person name="Dean R."/>
            <person name="Payne G.A."/>
        </authorList>
    </citation>
    <scope>NUCLEOTIDE SEQUENCE [LARGE SCALE GENOMIC DNA]</scope>
    <source>
        <strain>ATCC 200026 / FGSC A1120 / IAM 13836 / NRRL 3357 / JCM 12722 / SRRC 167</strain>
    </source>
</reference>
<reference key="2">
    <citation type="journal article" date="2010" name="Mol. Plant Pathol.">
        <title>Beyond aflatoxin: four distinct expression patterns and functional roles associated with Aspergillus flavus secondary metabolism gene clusters.</title>
        <authorList>
            <person name="Georgianna D.R."/>
            <person name="Fedorova N.D."/>
            <person name="Burroughs J.L."/>
            <person name="Dolezal A.L."/>
            <person name="Bok J.W."/>
            <person name="Horowitz-Brown S."/>
            <person name="Woloshuk C.P."/>
            <person name="Yu J."/>
            <person name="Keller N.P."/>
            <person name="Payne G.A."/>
        </authorList>
    </citation>
    <scope>IDENTIFICATION OF THE GENE CLUSTER 23</scope>
    <scope>FUNCTION</scope>
</reference>
<reference key="3">
    <citation type="journal article" date="2015" name="Fungal Genet. Biol.">
        <title>An Aspergillus flavus secondary metabolic gene cluster containing a hybrid PKS-NRPS is necessary for synthesis of the 2-pyridones, leporins.</title>
        <authorList>
            <person name="Cary J.W."/>
            <person name="Uka V."/>
            <person name="Han Z."/>
            <person name="Buyst D."/>
            <person name="Harris-Coward P.Y."/>
            <person name="Ehrlich K.C."/>
            <person name="Wei Q."/>
            <person name="Bhatnagar D."/>
            <person name="Dowd P.F."/>
            <person name="Martens S.L."/>
            <person name="Calvo A.M."/>
            <person name="Martins J.C."/>
            <person name="Vanhaecke L."/>
            <person name="Coenye T."/>
            <person name="De Saeger S."/>
            <person name="Di Mavungu J.D."/>
        </authorList>
    </citation>
    <scope>FUNCTION</scope>
    <scope>DISRUPTION PHENOTYPE</scope>
    <scope>PATHWAY</scope>
</reference>
<protein>
    <recommendedName>
        <fullName evidence="5">O-methyltransferase lepI</fullName>
        <ecNumber evidence="8">2.1.1.-</ecNumber>
    </recommendedName>
    <alternativeName>
        <fullName evidence="5">Leporins biosynthesis protein I</fullName>
    </alternativeName>
</protein>
<feature type="chain" id="PRO_0000438455" description="O-methyltransferase lepI">
    <location>
        <begin position="1"/>
        <end position="387"/>
    </location>
</feature>
<feature type="region of interest" description="Substrate binding" evidence="1">
    <location>
        <begin position="175"/>
        <end position="195"/>
    </location>
</feature>
<feature type="binding site" evidence="1">
    <location>
        <begin position="135"/>
        <end position="148"/>
    </location>
    <ligand>
        <name>substrate</name>
    </ligand>
</feature>
<feature type="binding site" evidence="2">
    <location>
        <begin position="227"/>
        <end position="228"/>
    </location>
    <ligand>
        <name>S-adenosyl-L-methionine</name>
        <dbReference type="ChEBI" id="CHEBI:59789"/>
    </ligand>
</feature>
<feature type="binding site" evidence="3">
    <location>
        <position position="252"/>
    </location>
    <ligand>
        <name>S-adenosyl-L-methionine</name>
        <dbReference type="ChEBI" id="CHEBI:59789"/>
    </ligand>
</feature>
<feature type="binding site" evidence="2">
    <location>
        <begin position="275"/>
        <end position="276"/>
    </location>
    <ligand>
        <name>S-adenosyl-L-methionine</name>
        <dbReference type="ChEBI" id="CHEBI:59789"/>
    </ligand>
</feature>
<feature type="binding site" evidence="2">
    <location>
        <position position="291"/>
    </location>
    <ligand>
        <name>S-adenosyl-L-methionine</name>
        <dbReference type="ChEBI" id="CHEBI:59789"/>
    </ligand>
</feature>
<feature type="helix" evidence="10">
    <location>
        <begin position="2"/>
        <end position="16"/>
    </location>
</feature>
<feature type="helix" evidence="10">
    <location>
        <begin position="20"/>
        <end position="37"/>
    </location>
</feature>
<feature type="helix" evidence="10">
    <location>
        <begin position="40"/>
        <end position="49"/>
    </location>
</feature>
<feature type="helix" evidence="10">
    <location>
        <begin position="52"/>
        <end position="63"/>
    </location>
</feature>
<feature type="helix" evidence="10">
    <location>
        <begin position="65"/>
        <end position="71"/>
    </location>
</feature>
<feature type="helix" evidence="10">
    <location>
        <begin position="78"/>
        <end position="85"/>
    </location>
</feature>
<feature type="helix" evidence="10">
    <location>
        <begin position="89"/>
        <end position="101"/>
    </location>
</feature>
<feature type="strand" evidence="10">
    <location>
        <begin position="104"/>
        <end position="107"/>
    </location>
</feature>
<feature type="helix" evidence="10">
    <location>
        <begin position="117"/>
        <end position="123"/>
    </location>
</feature>
<feature type="helix" evidence="10">
    <location>
        <begin position="125"/>
        <end position="136"/>
    </location>
</feature>
<feature type="helix" evidence="10">
    <location>
        <begin position="138"/>
        <end position="151"/>
    </location>
</feature>
<feature type="helix" evidence="10">
    <location>
        <begin position="164"/>
        <end position="169"/>
    </location>
</feature>
<feature type="helix" evidence="10">
    <location>
        <begin position="175"/>
        <end position="179"/>
    </location>
</feature>
<feature type="helix" evidence="10">
    <location>
        <begin position="183"/>
        <end position="192"/>
    </location>
</feature>
<feature type="helix" evidence="10">
    <location>
        <begin position="201"/>
        <end position="203"/>
    </location>
</feature>
<feature type="helix" evidence="10">
    <location>
        <begin position="207"/>
        <end position="211"/>
    </location>
</feature>
<feature type="turn" evidence="10">
    <location>
        <begin position="217"/>
        <end position="219"/>
    </location>
</feature>
<feature type="strand" evidence="10">
    <location>
        <begin position="221"/>
        <end position="226"/>
    </location>
</feature>
<feature type="turn" evidence="9">
    <location>
        <begin position="229"/>
        <end position="231"/>
    </location>
</feature>
<feature type="helix" evidence="10">
    <location>
        <begin position="232"/>
        <end position="240"/>
    </location>
</feature>
<feature type="strand" evidence="10">
    <location>
        <begin position="246"/>
        <end position="252"/>
    </location>
</feature>
<feature type="helix" evidence="10">
    <location>
        <begin position="254"/>
        <end position="261"/>
    </location>
</feature>
<feature type="strand" evidence="10">
    <location>
        <begin position="266"/>
        <end position="268"/>
    </location>
</feature>
<feature type="strand" evidence="10">
    <location>
        <begin position="270"/>
        <end position="273"/>
    </location>
</feature>
<feature type="strand" evidence="10">
    <location>
        <begin position="286"/>
        <end position="292"/>
    </location>
</feature>
<feature type="helix" evidence="10">
    <location>
        <begin position="294"/>
        <end position="296"/>
    </location>
</feature>
<feature type="helix" evidence="10">
    <location>
        <begin position="299"/>
        <end position="309"/>
    </location>
</feature>
<feature type="helix" evidence="10">
    <location>
        <begin position="310"/>
        <end position="312"/>
    </location>
</feature>
<feature type="strand" evidence="10">
    <location>
        <begin position="318"/>
        <end position="324"/>
    </location>
</feature>
<feature type="strand" evidence="10">
    <location>
        <begin position="328"/>
        <end position="330"/>
    </location>
</feature>
<feature type="helix" evidence="10">
    <location>
        <begin position="333"/>
        <end position="346"/>
    </location>
</feature>
<feature type="helix" evidence="10">
    <location>
        <begin position="353"/>
        <end position="362"/>
    </location>
</feature>
<feature type="strand" evidence="10">
    <location>
        <begin position="365"/>
        <end position="372"/>
    </location>
</feature>
<feature type="strand" evidence="10">
    <location>
        <begin position="374"/>
        <end position="377"/>
    </location>
</feature>
<feature type="strand" evidence="10">
    <location>
        <begin position="379"/>
        <end position="386"/>
    </location>
</feature>